<sequence length="279" mass="30247">MREFEAHGATASPGVVTNFLGVRIPSDIMPSILKSLEGQKEGFPIPGNWHADIAEWAAALLSVREAKTSYRILEVGCGWGCWLSNMGVAAKARGLKIDLIGVEGDQQNIEHAKHTLALNGIEAHEFQLTNGVASARNGVALFPILDGPGEVWGAEPIFHPDAETISKARAAGSHTELKCYTLDDLSHGKPIDLLHVDIQGSELDFVKGNFDEISTLVKRILIGTHSRYLEGSLQKFLLDQGWALEMDRPAICTNVAGKPQIAVDGVLLFRSPTMPHPVF</sequence>
<keyword id="KW-0489">Methyltransferase</keyword>
<keyword id="KW-0614">Plasmid</keyword>
<keyword id="KW-1185">Reference proteome</keyword>
<keyword id="KW-0808">Transferase</keyword>
<name>Y4284_JANSC</name>
<reference key="1">
    <citation type="submission" date="2006-02" db="EMBL/GenBank/DDBJ databases">
        <title>Complete sequence of plasmid 1 of Jannaschia sp. CCS1.</title>
        <authorList>
            <consortium name="US DOE Joint Genome Institute"/>
            <person name="Copeland A."/>
            <person name="Lucas S."/>
            <person name="Lapidus A."/>
            <person name="Barry K."/>
            <person name="Detter J.C."/>
            <person name="Glavina del Rio T."/>
            <person name="Hammon N."/>
            <person name="Israni S."/>
            <person name="Pitluck S."/>
            <person name="Brettin T."/>
            <person name="Bruce D."/>
            <person name="Han C."/>
            <person name="Tapia R."/>
            <person name="Gilna P."/>
            <person name="Chertkov O."/>
            <person name="Saunders E."/>
            <person name="Schmutz J."/>
            <person name="Larimer F."/>
            <person name="Land M."/>
            <person name="Kyrpides N."/>
            <person name="Lykidis A."/>
            <person name="Moran M.A."/>
            <person name="Belas R."/>
            <person name="Ye W."/>
            <person name="Buchan A."/>
            <person name="Gonzalez J.M."/>
            <person name="Schell M.A."/>
            <person name="Richardson P."/>
        </authorList>
    </citation>
    <scope>NUCLEOTIDE SEQUENCE [LARGE SCALE GENOMIC DNA]</scope>
    <source>
        <strain>CCS1</strain>
    </source>
</reference>
<proteinExistence type="predicted"/>
<protein>
    <recommendedName>
        <fullName>Putative methyltransferase Jann_4284</fullName>
        <ecNumber>2.1.1.-</ecNumber>
    </recommendedName>
</protein>
<feature type="chain" id="PRO_0000240007" description="Putative methyltransferase Jann_4284">
    <location>
        <begin position="1"/>
        <end position="279"/>
    </location>
</feature>
<accession>Q28JB2</accession>
<organism>
    <name type="scientific">Jannaschia sp. (strain CCS1)</name>
    <dbReference type="NCBI Taxonomy" id="290400"/>
    <lineage>
        <taxon>Bacteria</taxon>
        <taxon>Pseudomonadati</taxon>
        <taxon>Pseudomonadota</taxon>
        <taxon>Alphaproteobacteria</taxon>
        <taxon>Rhodobacterales</taxon>
        <taxon>Roseobacteraceae</taxon>
        <taxon>Jannaschia</taxon>
    </lineage>
</organism>
<dbReference type="EC" id="2.1.1.-"/>
<dbReference type="EMBL" id="CP000265">
    <property type="protein sequence ID" value="ABD57200.1"/>
    <property type="molecule type" value="Genomic_DNA"/>
</dbReference>
<dbReference type="KEGG" id="jan:Jann_4213"/>
<dbReference type="eggNOG" id="COG2813">
    <property type="taxonomic scope" value="Bacteria"/>
</dbReference>
<dbReference type="HOGENOM" id="CLU_071547_0_0_5"/>
<dbReference type="OrthoDB" id="7567573at2"/>
<dbReference type="Proteomes" id="UP000008326">
    <property type="component" value="Plasmid pCCS1"/>
</dbReference>
<dbReference type="GO" id="GO:0008168">
    <property type="term" value="F:methyltransferase activity"/>
    <property type="evidence" value="ECO:0007669"/>
    <property type="project" value="UniProtKB-KW"/>
</dbReference>
<dbReference type="GO" id="GO:0032259">
    <property type="term" value="P:methylation"/>
    <property type="evidence" value="ECO:0007669"/>
    <property type="project" value="UniProtKB-KW"/>
</dbReference>
<dbReference type="Gene3D" id="3.40.50.150">
    <property type="entry name" value="Vaccinia Virus protein VP39"/>
    <property type="match status" value="1"/>
</dbReference>
<dbReference type="InterPro" id="IPR006342">
    <property type="entry name" value="FkbM_mtfrase"/>
</dbReference>
<dbReference type="InterPro" id="IPR029063">
    <property type="entry name" value="SAM-dependent_MTases_sf"/>
</dbReference>
<dbReference type="Pfam" id="PF05050">
    <property type="entry name" value="Methyltransf_21"/>
    <property type="match status" value="1"/>
</dbReference>
<dbReference type="SUPFAM" id="SSF53335">
    <property type="entry name" value="S-adenosyl-L-methionine-dependent methyltransferases"/>
    <property type="match status" value="1"/>
</dbReference>
<geneLocation type="plasmid">
    <name>pCCS1</name>
</geneLocation>
<gene>
    <name type="ordered locus">Jann_4284</name>
    <name type="ORF">Jann_4213</name>
</gene>